<dbReference type="EMBL" id="Y17059">
    <property type="protein sequence ID" value="CAA76607.1"/>
    <property type="molecule type" value="mRNA"/>
</dbReference>
<dbReference type="SMR" id="Q9YGH0"/>
<dbReference type="GO" id="GO:0005576">
    <property type="term" value="C:extracellular region"/>
    <property type="evidence" value="ECO:0007669"/>
    <property type="project" value="UniProtKB-SubCell"/>
</dbReference>
<dbReference type="GO" id="GO:0090729">
    <property type="term" value="F:toxin activity"/>
    <property type="evidence" value="ECO:0007669"/>
    <property type="project" value="InterPro"/>
</dbReference>
<dbReference type="CDD" id="cd00206">
    <property type="entry name" value="TFP_snake_toxin"/>
    <property type="match status" value="1"/>
</dbReference>
<dbReference type="Gene3D" id="2.10.60.10">
    <property type="entry name" value="CD59"/>
    <property type="match status" value="1"/>
</dbReference>
<dbReference type="InterPro" id="IPR003571">
    <property type="entry name" value="Snake_3FTx"/>
</dbReference>
<dbReference type="InterPro" id="IPR045860">
    <property type="entry name" value="Snake_toxin-like_sf"/>
</dbReference>
<dbReference type="SUPFAM" id="SSF57302">
    <property type="entry name" value="Snake toxin-like"/>
    <property type="match status" value="1"/>
</dbReference>
<reference key="1">
    <citation type="submission" date="1998-04" db="EMBL/GenBank/DDBJ databases">
        <authorList>
            <person name="Chang L.-S."/>
        </authorList>
    </citation>
    <scope>NUCLEOTIDE SEQUENCE [MRNA]</scope>
    <source>
        <tissue>Venom gland</tissue>
    </source>
</reference>
<organism>
    <name type="scientific">Bungarus multicinctus</name>
    <name type="common">Many-banded krait</name>
    <dbReference type="NCBI Taxonomy" id="8616"/>
    <lineage>
        <taxon>Eukaryota</taxon>
        <taxon>Metazoa</taxon>
        <taxon>Chordata</taxon>
        <taxon>Craniata</taxon>
        <taxon>Vertebrata</taxon>
        <taxon>Euteleostomi</taxon>
        <taxon>Lepidosauria</taxon>
        <taxon>Squamata</taxon>
        <taxon>Bifurcata</taxon>
        <taxon>Unidentata</taxon>
        <taxon>Episquamata</taxon>
        <taxon>Toxicofera</taxon>
        <taxon>Serpentes</taxon>
        <taxon>Colubroidea</taxon>
        <taxon>Elapidae</taxon>
        <taxon>Bungarinae</taxon>
        <taxon>Bungarus</taxon>
    </lineage>
</organism>
<accession>Q9YGH0</accession>
<name>3NOH3_BUNMU</name>
<protein>
    <recommendedName>
        <fullName>Cytotoxin-like protein TA-BMBGT3</fullName>
    </recommendedName>
</protein>
<keyword id="KW-1015">Disulfide bond</keyword>
<keyword id="KW-0964">Secreted</keyword>
<keyword id="KW-0732">Signal</keyword>
<proteinExistence type="inferred from homology"/>
<evidence type="ECO:0000250" key="1"/>
<evidence type="ECO:0000250" key="2">
    <source>
        <dbReference type="UniProtKB" id="P81782"/>
    </source>
</evidence>
<evidence type="ECO:0000250" key="3">
    <source>
        <dbReference type="UniProtKB" id="Q9PW19"/>
    </source>
</evidence>
<evidence type="ECO:0000255" key="4"/>
<evidence type="ECO:0000305" key="5"/>
<sequence>MKTLLLTLVVVTIICLDLGYTEMCNMCVRPYPFMSSCCPEGQDRCYKSYWVNENRKQEAYHGKYPVILERGCVTACTGPGSGSIYNLYTCCPTNRCGSSSTSG</sequence>
<comment type="subcellular location">
    <subcellularLocation>
        <location evidence="1">Secreted</location>
    </subcellularLocation>
</comment>
<comment type="tissue specificity">
    <text evidence="5">Expressed by the venom gland.</text>
</comment>
<comment type="miscellaneous">
    <text evidence="3">Negative results: does not bind to muscarinic acetylcholine receptors M1 and M2 (CHRM1/CHRM2). Is unable to compete with alpha-bungarotoxin for binding to nAchR at concentrations up to 100 uM. Is not toxic to mice at doses up to 3 mg/kg.</text>
</comment>
<comment type="similarity">
    <text evidence="5">Belongs to the three-finger toxin family. Ancestral subfamily. Orphan group XVII sub-subfamily.</text>
</comment>
<feature type="signal peptide" evidence="4">
    <location>
        <begin position="1"/>
        <end position="21"/>
    </location>
</feature>
<feature type="chain" id="PRO_0000035485" description="Cytotoxin-like protein TA-BMBGT3">
    <location>
        <begin position="22"/>
        <end position="103"/>
    </location>
</feature>
<feature type="disulfide bond" evidence="2">
    <location>
        <begin position="24"/>
        <end position="45"/>
    </location>
</feature>
<feature type="disulfide bond" evidence="2">
    <location>
        <begin position="27"/>
        <end position="37"/>
    </location>
</feature>
<feature type="disulfide bond" evidence="2">
    <location>
        <begin position="38"/>
        <end position="72"/>
    </location>
</feature>
<feature type="disulfide bond" evidence="2">
    <location>
        <begin position="76"/>
        <end position="90"/>
    </location>
</feature>
<feature type="disulfide bond" evidence="2">
    <location>
        <begin position="91"/>
        <end position="96"/>
    </location>
</feature>